<comment type="function">
    <text evidence="1">Plays an essential role in the initiation and regulation of chromosomal replication. ATP-DnaA binds to the origin of replication (oriC) to initiate formation of the DNA replication initiation complex once per cell cycle. Binds the DnaA box (a 9 base pair repeat at the origin) and separates the double-stranded (ds)DNA. Forms a right-handed helical filament on oriC DNA; dsDNA binds to the exterior of the filament while single-stranded (ss)DNA is stabiized in the filament's interior. The ATP-DnaA-oriC complex binds and stabilizes one strand of the AT-rich DNA unwinding element (DUE), permitting loading of DNA polymerase. After initiation quickly degrades to an ADP-DnaA complex that is not apt for DNA replication. Binds acidic phospholipids.</text>
</comment>
<comment type="subunit">
    <text evidence="1">Oligomerizes as a right-handed, spiral filament on DNA at oriC.</text>
</comment>
<comment type="subcellular location">
    <subcellularLocation>
        <location evidence="1">Cytoplasm</location>
    </subcellularLocation>
</comment>
<comment type="domain">
    <text evidence="1">Domain I is involved in oligomerization and binding regulators, domain II is flexibile and of varying length in different bacteria, domain III forms the AAA+ region, while domain IV binds dsDNA.</text>
</comment>
<comment type="similarity">
    <text evidence="1">Belongs to the DnaA family.</text>
</comment>
<organism>
    <name type="scientific">Burkholderia pseudomallei (strain 1710b)</name>
    <dbReference type="NCBI Taxonomy" id="320372"/>
    <lineage>
        <taxon>Bacteria</taxon>
        <taxon>Pseudomonadati</taxon>
        <taxon>Pseudomonadota</taxon>
        <taxon>Betaproteobacteria</taxon>
        <taxon>Burkholderiales</taxon>
        <taxon>Burkholderiaceae</taxon>
        <taxon>Burkholderia</taxon>
        <taxon>pseudomallei group</taxon>
    </lineage>
</organism>
<feature type="chain" id="PRO_1000048619" description="Chromosomal replication initiator protein DnaA">
    <location>
        <begin position="1"/>
        <end position="533"/>
    </location>
</feature>
<feature type="region of interest" description="Domain I, interacts with DnaA modulators" evidence="1">
    <location>
        <begin position="1"/>
        <end position="72"/>
    </location>
</feature>
<feature type="region of interest" description="Domain II" evidence="1">
    <location>
        <begin position="72"/>
        <end position="196"/>
    </location>
</feature>
<feature type="region of interest" description="Disordered" evidence="2">
    <location>
        <begin position="83"/>
        <end position="120"/>
    </location>
</feature>
<feature type="region of interest" description="Domain III, AAA+ region" evidence="1">
    <location>
        <begin position="197"/>
        <end position="413"/>
    </location>
</feature>
<feature type="region of interest" description="Domain IV, binds dsDNA" evidence="1">
    <location>
        <begin position="414"/>
        <end position="533"/>
    </location>
</feature>
<feature type="compositionally biased region" description="Pro residues" evidence="2">
    <location>
        <begin position="96"/>
        <end position="110"/>
    </location>
</feature>
<feature type="compositionally biased region" description="Low complexity" evidence="2">
    <location>
        <begin position="111"/>
        <end position="120"/>
    </location>
</feature>
<feature type="binding site" evidence="1">
    <location>
        <position position="241"/>
    </location>
    <ligand>
        <name>ATP</name>
        <dbReference type="ChEBI" id="CHEBI:30616"/>
    </ligand>
</feature>
<feature type="binding site" evidence="1">
    <location>
        <position position="243"/>
    </location>
    <ligand>
        <name>ATP</name>
        <dbReference type="ChEBI" id="CHEBI:30616"/>
    </ligand>
</feature>
<feature type="binding site" evidence="1">
    <location>
        <position position="244"/>
    </location>
    <ligand>
        <name>ATP</name>
        <dbReference type="ChEBI" id="CHEBI:30616"/>
    </ligand>
</feature>
<feature type="binding site" evidence="1">
    <location>
        <position position="245"/>
    </location>
    <ligand>
        <name>ATP</name>
        <dbReference type="ChEBI" id="CHEBI:30616"/>
    </ligand>
</feature>
<proteinExistence type="inferred from homology"/>
<protein>
    <recommendedName>
        <fullName evidence="1">Chromosomal replication initiator protein DnaA</fullName>
    </recommendedName>
</protein>
<dbReference type="EMBL" id="CP000124">
    <property type="protein sequence ID" value="ABA49564.1"/>
    <property type="molecule type" value="Genomic_DNA"/>
</dbReference>
<dbReference type="RefSeq" id="WP_004525818.1">
    <property type="nucleotide sequence ID" value="NC_007434.1"/>
</dbReference>
<dbReference type="SMR" id="Q3JXI6"/>
<dbReference type="EnsemblBacteria" id="ABA49564">
    <property type="protein sequence ID" value="ABA49564"/>
    <property type="gene ID" value="BURPS1710b_0301"/>
</dbReference>
<dbReference type="KEGG" id="bpm:BURPS1710b_0301"/>
<dbReference type="HOGENOM" id="CLU_026910_0_1_4"/>
<dbReference type="Proteomes" id="UP000002700">
    <property type="component" value="Chromosome I"/>
</dbReference>
<dbReference type="GO" id="GO:0005737">
    <property type="term" value="C:cytoplasm"/>
    <property type="evidence" value="ECO:0007669"/>
    <property type="project" value="UniProtKB-SubCell"/>
</dbReference>
<dbReference type="GO" id="GO:0005886">
    <property type="term" value="C:plasma membrane"/>
    <property type="evidence" value="ECO:0007669"/>
    <property type="project" value="TreeGrafter"/>
</dbReference>
<dbReference type="GO" id="GO:0005524">
    <property type="term" value="F:ATP binding"/>
    <property type="evidence" value="ECO:0007669"/>
    <property type="project" value="UniProtKB-UniRule"/>
</dbReference>
<dbReference type="GO" id="GO:0016887">
    <property type="term" value="F:ATP hydrolysis activity"/>
    <property type="evidence" value="ECO:0007669"/>
    <property type="project" value="InterPro"/>
</dbReference>
<dbReference type="GO" id="GO:0003688">
    <property type="term" value="F:DNA replication origin binding"/>
    <property type="evidence" value="ECO:0007669"/>
    <property type="project" value="UniProtKB-UniRule"/>
</dbReference>
<dbReference type="GO" id="GO:0008289">
    <property type="term" value="F:lipid binding"/>
    <property type="evidence" value="ECO:0007669"/>
    <property type="project" value="UniProtKB-KW"/>
</dbReference>
<dbReference type="GO" id="GO:0006270">
    <property type="term" value="P:DNA replication initiation"/>
    <property type="evidence" value="ECO:0007669"/>
    <property type="project" value="UniProtKB-UniRule"/>
</dbReference>
<dbReference type="GO" id="GO:0006275">
    <property type="term" value="P:regulation of DNA replication"/>
    <property type="evidence" value="ECO:0007669"/>
    <property type="project" value="UniProtKB-UniRule"/>
</dbReference>
<dbReference type="CDD" id="cd00009">
    <property type="entry name" value="AAA"/>
    <property type="match status" value="1"/>
</dbReference>
<dbReference type="CDD" id="cd06571">
    <property type="entry name" value="Bac_DnaA_C"/>
    <property type="match status" value="1"/>
</dbReference>
<dbReference type="FunFam" id="1.10.8.60:FF:000003">
    <property type="entry name" value="Chromosomal replication initiator protein DnaA"/>
    <property type="match status" value="1"/>
</dbReference>
<dbReference type="FunFam" id="3.40.50.300:FF:000668">
    <property type="entry name" value="Chromosomal replication initiator protein DnaA"/>
    <property type="match status" value="1"/>
</dbReference>
<dbReference type="Gene3D" id="1.10.1750.10">
    <property type="match status" value="1"/>
</dbReference>
<dbReference type="Gene3D" id="1.10.8.60">
    <property type="match status" value="1"/>
</dbReference>
<dbReference type="Gene3D" id="3.30.300.180">
    <property type="match status" value="1"/>
</dbReference>
<dbReference type="Gene3D" id="3.40.50.300">
    <property type="entry name" value="P-loop containing nucleotide triphosphate hydrolases"/>
    <property type="match status" value="1"/>
</dbReference>
<dbReference type="HAMAP" id="MF_00377">
    <property type="entry name" value="DnaA_bact"/>
    <property type="match status" value="1"/>
</dbReference>
<dbReference type="InterPro" id="IPR003593">
    <property type="entry name" value="AAA+_ATPase"/>
</dbReference>
<dbReference type="InterPro" id="IPR001957">
    <property type="entry name" value="Chromosome_initiator_DnaA"/>
</dbReference>
<dbReference type="InterPro" id="IPR020591">
    <property type="entry name" value="Chromosome_initiator_DnaA-like"/>
</dbReference>
<dbReference type="InterPro" id="IPR018312">
    <property type="entry name" value="Chromosome_initiator_DnaA_CS"/>
</dbReference>
<dbReference type="InterPro" id="IPR013159">
    <property type="entry name" value="DnaA_C"/>
</dbReference>
<dbReference type="InterPro" id="IPR013317">
    <property type="entry name" value="DnaA_dom"/>
</dbReference>
<dbReference type="InterPro" id="IPR024633">
    <property type="entry name" value="DnaA_N_dom"/>
</dbReference>
<dbReference type="InterPro" id="IPR038454">
    <property type="entry name" value="DnaA_N_sf"/>
</dbReference>
<dbReference type="InterPro" id="IPR055199">
    <property type="entry name" value="Hda_lid"/>
</dbReference>
<dbReference type="InterPro" id="IPR027417">
    <property type="entry name" value="P-loop_NTPase"/>
</dbReference>
<dbReference type="InterPro" id="IPR010921">
    <property type="entry name" value="Trp_repressor/repl_initiator"/>
</dbReference>
<dbReference type="NCBIfam" id="TIGR00362">
    <property type="entry name" value="DnaA"/>
    <property type="match status" value="1"/>
</dbReference>
<dbReference type="PANTHER" id="PTHR30050">
    <property type="entry name" value="CHROMOSOMAL REPLICATION INITIATOR PROTEIN DNAA"/>
    <property type="match status" value="1"/>
</dbReference>
<dbReference type="PANTHER" id="PTHR30050:SF2">
    <property type="entry name" value="CHROMOSOMAL REPLICATION INITIATOR PROTEIN DNAA"/>
    <property type="match status" value="1"/>
</dbReference>
<dbReference type="Pfam" id="PF00308">
    <property type="entry name" value="Bac_DnaA"/>
    <property type="match status" value="1"/>
</dbReference>
<dbReference type="Pfam" id="PF08299">
    <property type="entry name" value="Bac_DnaA_C"/>
    <property type="match status" value="1"/>
</dbReference>
<dbReference type="Pfam" id="PF11638">
    <property type="entry name" value="DnaA_N"/>
    <property type="match status" value="1"/>
</dbReference>
<dbReference type="Pfam" id="PF22688">
    <property type="entry name" value="Hda_lid"/>
    <property type="match status" value="1"/>
</dbReference>
<dbReference type="PRINTS" id="PR00051">
    <property type="entry name" value="DNAA"/>
</dbReference>
<dbReference type="SMART" id="SM00382">
    <property type="entry name" value="AAA"/>
    <property type="match status" value="1"/>
</dbReference>
<dbReference type="SMART" id="SM00760">
    <property type="entry name" value="Bac_DnaA_C"/>
    <property type="match status" value="1"/>
</dbReference>
<dbReference type="SUPFAM" id="SSF52540">
    <property type="entry name" value="P-loop containing nucleoside triphosphate hydrolases"/>
    <property type="match status" value="1"/>
</dbReference>
<dbReference type="SUPFAM" id="SSF48295">
    <property type="entry name" value="TrpR-like"/>
    <property type="match status" value="1"/>
</dbReference>
<dbReference type="PROSITE" id="PS01008">
    <property type="entry name" value="DNAA"/>
    <property type="match status" value="1"/>
</dbReference>
<sequence>MNDFWQHCSALLERELTPQQYVTWIKPLAPVAFDAAANTLSIAAPNRFKLDWVKSQFSGRISDLARDFWNAPIEVQFVLDPKAGQRSPAGATPLAPRAPLPSANPAPVAPGPASAPAVDAHAPAPAGMNAATAAAVAAAQAAQAAQANAAALNADEAADLDLPSLTAHEAAAGRRTWRPGAANANSEAADSMYERSKLNPVLTFDNFVTGKANQLARAAAIQVADNPGISYNPLFLYGGVGLGKTHLIHAIGNQLLLDKPGARIRYIHAEQYVSDVVKAYQRKAFDDFKRYYHSLDLLLIDDIQFFSGKSRTQEEFFYAFEALVANKAQVIITSDTYPKEISGIDDRLISRFDSGLTVAIEPPELEMRVAILMRKAQSEGVSLSEDVAFFVAKHLRSNVRELEGALRKILAYSKFHGREITIELTKEALKDLLTVQNRQISVENIQKTVADFYNIKVADMYSKKRPANIARPRQIAMYLAKELTQKSLPEIGELFGGRDHTTVLHAVRKIADERGKDAQLNHELHVLEQTLKG</sequence>
<name>DNAA_BURP1</name>
<gene>
    <name evidence="1" type="primary">dnaA</name>
    <name type="ordered locus">BURPS1710b_0301</name>
</gene>
<accession>Q3JXI6</accession>
<keyword id="KW-0067">ATP-binding</keyword>
<keyword id="KW-0963">Cytoplasm</keyword>
<keyword id="KW-0235">DNA replication</keyword>
<keyword id="KW-0238">DNA-binding</keyword>
<keyword id="KW-0446">Lipid-binding</keyword>
<keyword id="KW-0547">Nucleotide-binding</keyword>
<evidence type="ECO:0000255" key="1">
    <source>
        <dbReference type="HAMAP-Rule" id="MF_00377"/>
    </source>
</evidence>
<evidence type="ECO:0000256" key="2">
    <source>
        <dbReference type="SAM" id="MobiDB-lite"/>
    </source>
</evidence>
<reference key="1">
    <citation type="journal article" date="2010" name="Genome Biol. Evol.">
        <title>Continuing evolution of Burkholderia mallei through genome reduction and large-scale rearrangements.</title>
        <authorList>
            <person name="Losada L."/>
            <person name="Ronning C.M."/>
            <person name="DeShazer D."/>
            <person name="Woods D."/>
            <person name="Fedorova N."/>
            <person name="Kim H.S."/>
            <person name="Shabalina S.A."/>
            <person name="Pearson T.R."/>
            <person name="Brinkac L."/>
            <person name="Tan P."/>
            <person name="Nandi T."/>
            <person name="Crabtree J."/>
            <person name="Badger J."/>
            <person name="Beckstrom-Sternberg S."/>
            <person name="Saqib M."/>
            <person name="Schutzer S.E."/>
            <person name="Keim P."/>
            <person name="Nierman W.C."/>
        </authorList>
    </citation>
    <scope>NUCLEOTIDE SEQUENCE [LARGE SCALE GENOMIC DNA]</scope>
    <source>
        <strain>1710b</strain>
    </source>
</reference>